<evidence type="ECO:0000250" key="1"/>
<evidence type="ECO:0000250" key="2">
    <source>
        <dbReference type="UniProtKB" id="P55095"/>
    </source>
</evidence>
<evidence type="ECO:0000305" key="3"/>
<feature type="peptide" id="PRO_0000043920" description="Glucagon">
    <location>
        <begin position="1"/>
        <end position="29"/>
    </location>
</feature>
<feature type="modified residue" description="Phosphoserine" evidence="2">
    <location>
        <position position="2"/>
    </location>
</feature>
<sequence length="29" mass="3483">HSQGTFTSDYSKYLDSRRAQDFVQWLMNT</sequence>
<dbReference type="PIR" id="C39258">
    <property type="entry name" value="C39258"/>
</dbReference>
<dbReference type="BMRB" id="P68275"/>
<dbReference type="SMR" id="P68275"/>
<dbReference type="GO" id="GO:0005615">
    <property type="term" value="C:extracellular space"/>
    <property type="evidence" value="ECO:0007669"/>
    <property type="project" value="TreeGrafter"/>
</dbReference>
<dbReference type="GO" id="GO:0031769">
    <property type="term" value="F:glucagon receptor binding"/>
    <property type="evidence" value="ECO:0007669"/>
    <property type="project" value="TreeGrafter"/>
</dbReference>
<dbReference type="GO" id="GO:0005179">
    <property type="term" value="F:hormone activity"/>
    <property type="evidence" value="ECO:0007669"/>
    <property type="project" value="UniProtKB-KW"/>
</dbReference>
<dbReference type="GO" id="GO:0007188">
    <property type="term" value="P:adenylate cyclase-modulating G protein-coupled receptor signaling pathway"/>
    <property type="evidence" value="ECO:0007669"/>
    <property type="project" value="TreeGrafter"/>
</dbReference>
<dbReference type="GO" id="GO:0043066">
    <property type="term" value="P:negative regulation of apoptotic process"/>
    <property type="evidence" value="ECO:0007669"/>
    <property type="project" value="TreeGrafter"/>
</dbReference>
<dbReference type="GO" id="GO:0035774">
    <property type="term" value="P:positive regulation of insulin secretion involved in cellular response to glucose stimulus"/>
    <property type="evidence" value="ECO:0007669"/>
    <property type="project" value="TreeGrafter"/>
</dbReference>
<dbReference type="GO" id="GO:0010737">
    <property type="term" value="P:protein kinase A signaling"/>
    <property type="evidence" value="ECO:0007669"/>
    <property type="project" value="TreeGrafter"/>
</dbReference>
<dbReference type="Gene3D" id="6.10.250.590">
    <property type="match status" value="1"/>
</dbReference>
<dbReference type="InterPro" id="IPR015550">
    <property type="entry name" value="Glucagon"/>
</dbReference>
<dbReference type="InterPro" id="IPR000532">
    <property type="entry name" value="Glucagon_GIP_secretin_VIP"/>
</dbReference>
<dbReference type="PANTHER" id="PTHR11418">
    <property type="entry name" value="GLUCAGON"/>
    <property type="match status" value="1"/>
</dbReference>
<dbReference type="PANTHER" id="PTHR11418:SF0">
    <property type="entry name" value="PRO-GLUCAGON"/>
    <property type="match status" value="1"/>
</dbReference>
<dbReference type="Pfam" id="PF00123">
    <property type="entry name" value="Hormone_2"/>
    <property type="match status" value="1"/>
</dbReference>
<dbReference type="PRINTS" id="PR00275">
    <property type="entry name" value="GLUCAGON"/>
</dbReference>
<dbReference type="SMART" id="SM00070">
    <property type="entry name" value="GLUCA"/>
    <property type="match status" value="1"/>
</dbReference>
<dbReference type="PROSITE" id="PS00260">
    <property type="entry name" value="GLUCAGON"/>
    <property type="match status" value="1"/>
</dbReference>
<accession>P68275</accession>
<accession>P25449</accession>
<reference key="1">
    <citation type="journal article" date="1990" name="Proc. Natl. Acad. Sci. U.S.A.">
        <title>Isolation and amino acid sequences of squirrel monkey (Saimiri sciurea) insulin and glucagon.</title>
        <authorList>
            <person name="Yu J.-H."/>
            <person name="Eng J."/>
            <person name="Yalow R.S."/>
        </authorList>
    </citation>
    <scope>PROTEIN SEQUENCE</scope>
    <source>
        <tissue>Pancreas</tissue>
    </source>
</reference>
<comment type="function">
    <text evidence="1">Glucagon plays a key role in glucose metabolism and homeostasis. Regulates blood glucose by increasing gluconeogenesis and decreasing glycolysis (By similarity).</text>
</comment>
<comment type="subcellular location">
    <subcellularLocation>
        <location evidence="1">Secreted</location>
    </subcellularLocation>
</comment>
<comment type="induction">
    <text evidence="1">Produced in the A cells of the islets of Langerhans in response to a drop in blood sugar concentration.</text>
</comment>
<comment type="similarity">
    <text evidence="3">Belongs to the glucagon family.</text>
</comment>
<protein>
    <recommendedName>
        <fullName>Glucagon</fullName>
    </recommendedName>
</protein>
<organism>
    <name type="scientific">Saimiri sciureus</name>
    <name type="common">Common squirrel monkey</name>
    <dbReference type="NCBI Taxonomy" id="9521"/>
    <lineage>
        <taxon>Eukaryota</taxon>
        <taxon>Metazoa</taxon>
        <taxon>Chordata</taxon>
        <taxon>Craniata</taxon>
        <taxon>Vertebrata</taxon>
        <taxon>Euteleostomi</taxon>
        <taxon>Mammalia</taxon>
        <taxon>Eutheria</taxon>
        <taxon>Euarchontoglires</taxon>
        <taxon>Primates</taxon>
        <taxon>Haplorrhini</taxon>
        <taxon>Platyrrhini</taxon>
        <taxon>Cebidae</taxon>
        <taxon>Saimiriinae</taxon>
        <taxon>Saimiri</taxon>
    </lineage>
</organism>
<gene>
    <name type="primary">GCG</name>
</gene>
<proteinExistence type="evidence at protein level"/>
<keyword id="KW-0903">Direct protein sequencing</keyword>
<keyword id="KW-0372">Hormone</keyword>
<keyword id="KW-0597">Phosphoprotein</keyword>
<keyword id="KW-0964">Secreted</keyword>
<name>GLUC_SAISC</name>